<evidence type="ECO:0000255" key="1">
    <source>
        <dbReference type="HAMAP-Rule" id="MF_01208"/>
    </source>
</evidence>
<protein>
    <recommendedName>
        <fullName evidence="1">Orotate phosphoribosyltransferase</fullName>
        <shortName evidence="1">OPRT</shortName>
        <shortName evidence="1">OPRTase</shortName>
        <ecNumber evidence="1">2.4.2.10</ecNumber>
    </recommendedName>
</protein>
<reference key="1">
    <citation type="submission" date="2008-10" db="EMBL/GenBank/DDBJ databases">
        <title>The complete genome sequence of Helicobacter pylori strain P12.</title>
        <authorList>
            <person name="Fischer W."/>
            <person name="Windhager L."/>
            <person name="Karnholz A."/>
            <person name="Zeiller M."/>
            <person name="Zimmer R."/>
            <person name="Haas R."/>
        </authorList>
    </citation>
    <scope>NUCLEOTIDE SEQUENCE [LARGE SCALE GENOMIC DNA]</scope>
    <source>
        <strain>P12</strain>
    </source>
</reference>
<proteinExistence type="inferred from homology"/>
<name>PYRE_HELP2</name>
<feature type="chain" id="PRO_1000138796" description="Orotate phosphoribosyltransferase">
    <location>
        <begin position="1"/>
        <end position="201"/>
    </location>
</feature>
<feature type="binding site" evidence="1">
    <location>
        <begin position="113"/>
        <end position="121"/>
    </location>
    <ligand>
        <name>5-phospho-alpha-D-ribose 1-diphosphate</name>
        <dbReference type="ChEBI" id="CHEBI:58017"/>
    </ligand>
</feature>
<feature type="binding site" evidence="1">
    <location>
        <position position="117"/>
    </location>
    <ligand>
        <name>orotate</name>
        <dbReference type="ChEBI" id="CHEBI:30839"/>
    </ligand>
</feature>
<feature type="binding site" evidence="1">
    <location>
        <position position="145"/>
    </location>
    <ligand>
        <name>orotate</name>
        <dbReference type="ChEBI" id="CHEBI:30839"/>
    </ligand>
</feature>
<accession>B6JN97</accession>
<keyword id="KW-0328">Glycosyltransferase</keyword>
<keyword id="KW-0460">Magnesium</keyword>
<keyword id="KW-0665">Pyrimidine biosynthesis</keyword>
<keyword id="KW-0808">Transferase</keyword>
<organism>
    <name type="scientific">Helicobacter pylori (strain P12)</name>
    <dbReference type="NCBI Taxonomy" id="570508"/>
    <lineage>
        <taxon>Bacteria</taxon>
        <taxon>Pseudomonadati</taxon>
        <taxon>Campylobacterota</taxon>
        <taxon>Epsilonproteobacteria</taxon>
        <taxon>Campylobacterales</taxon>
        <taxon>Helicobacteraceae</taxon>
        <taxon>Helicobacter</taxon>
    </lineage>
</organism>
<dbReference type="EC" id="2.4.2.10" evidence="1"/>
<dbReference type="EMBL" id="CP001217">
    <property type="protein sequence ID" value="ACJ08375.1"/>
    <property type="molecule type" value="Genomic_DNA"/>
</dbReference>
<dbReference type="SMR" id="B6JN97"/>
<dbReference type="KEGG" id="hpp:HPP12_1223"/>
<dbReference type="HOGENOM" id="CLU_074878_3_0_7"/>
<dbReference type="UniPathway" id="UPA00070">
    <property type="reaction ID" value="UER00119"/>
</dbReference>
<dbReference type="Proteomes" id="UP000008198">
    <property type="component" value="Chromosome"/>
</dbReference>
<dbReference type="GO" id="GO:0000287">
    <property type="term" value="F:magnesium ion binding"/>
    <property type="evidence" value="ECO:0007669"/>
    <property type="project" value="UniProtKB-UniRule"/>
</dbReference>
<dbReference type="GO" id="GO:0004588">
    <property type="term" value="F:orotate phosphoribosyltransferase activity"/>
    <property type="evidence" value="ECO:0007669"/>
    <property type="project" value="UniProtKB-UniRule"/>
</dbReference>
<dbReference type="GO" id="GO:0044205">
    <property type="term" value="P:'de novo' UMP biosynthetic process"/>
    <property type="evidence" value="ECO:0007669"/>
    <property type="project" value="UniProtKB-UniRule"/>
</dbReference>
<dbReference type="GO" id="GO:0019856">
    <property type="term" value="P:pyrimidine nucleobase biosynthetic process"/>
    <property type="evidence" value="ECO:0007669"/>
    <property type="project" value="InterPro"/>
</dbReference>
<dbReference type="CDD" id="cd06223">
    <property type="entry name" value="PRTases_typeI"/>
    <property type="match status" value="1"/>
</dbReference>
<dbReference type="Gene3D" id="3.40.50.2020">
    <property type="match status" value="1"/>
</dbReference>
<dbReference type="HAMAP" id="MF_01208">
    <property type="entry name" value="PyrE"/>
    <property type="match status" value="1"/>
</dbReference>
<dbReference type="InterPro" id="IPR023031">
    <property type="entry name" value="OPRT"/>
</dbReference>
<dbReference type="InterPro" id="IPR006273">
    <property type="entry name" value="Orotate_PRibTrfase_bac"/>
</dbReference>
<dbReference type="InterPro" id="IPR000836">
    <property type="entry name" value="PRibTrfase_dom"/>
</dbReference>
<dbReference type="InterPro" id="IPR029057">
    <property type="entry name" value="PRTase-like"/>
</dbReference>
<dbReference type="NCBIfam" id="TIGR01367">
    <property type="entry name" value="pyrE_Therm"/>
    <property type="match status" value="1"/>
</dbReference>
<dbReference type="PANTHER" id="PTHR19278">
    <property type="entry name" value="OROTATE PHOSPHORIBOSYLTRANSFERASE"/>
    <property type="match status" value="1"/>
</dbReference>
<dbReference type="PANTHER" id="PTHR19278:SF9">
    <property type="entry name" value="URIDINE 5'-MONOPHOSPHATE SYNTHASE"/>
    <property type="match status" value="1"/>
</dbReference>
<dbReference type="Pfam" id="PF00156">
    <property type="entry name" value="Pribosyltran"/>
    <property type="match status" value="1"/>
</dbReference>
<dbReference type="SUPFAM" id="SSF53271">
    <property type="entry name" value="PRTase-like"/>
    <property type="match status" value="1"/>
</dbReference>
<dbReference type="PROSITE" id="PS00103">
    <property type="entry name" value="PUR_PYR_PR_TRANSFER"/>
    <property type="match status" value="1"/>
</dbReference>
<comment type="function">
    <text evidence="1">Catalyzes the transfer of a ribosyl phosphate group from 5-phosphoribose 1-diphosphate to orotate, leading to the formation of orotidine monophosphate (OMP).</text>
</comment>
<comment type="catalytic activity">
    <reaction evidence="1">
        <text>orotidine 5'-phosphate + diphosphate = orotate + 5-phospho-alpha-D-ribose 1-diphosphate</text>
        <dbReference type="Rhea" id="RHEA:10380"/>
        <dbReference type="ChEBI" id="CHEBI:30839"/>
        <dbReference type="ChEBI" id="CHEBI:33019"/>
        <dbReference type="ChEBI" id="CHEBI:57538"/>
        <dbReference type="ChEBI" id="CHEBI:58017"/>
        <dbReference type="EC" id="2.4.2.10"/>
    </reaction>
</comment>
<comment type="cofactor">
    <cofactor evidence="1">
        <name>Mg(2+)</name>
        <dbReference type="ChEBI" id="CHEBI:18420"/>
    </cofactor>
</comment>
<comment type="pathway">
    <text evidence="1">Pyrimidine metabolism; UMP biosynthesis via de novo pathway; UMP from orotate: step 1/2.</text>
</comment>
<comment type="subunit">
    <text evidence="1">Homodimer.</text>
</comment>
<comment type="similarity">
    <text evidence="1">Belongs to the purine/pyrimidine phosphoribosyltransferase family. PyrE subfamily.</text>
</comment>
<gene>
    <name evidence="1" type="primary">pyrE</name>
    <name type="ordered locus">HPP12_1223</name>
</gene>
<sequence length="201" mass="22036">MDIKACYQNAQALLEGHFLLSSGFHSNYYLQSAKVLEDPKLAEQLAKELAKQIQEAHLNIECVCSPAIGGILAGYELARALGVRFIFTERVDNTMTLRRGFEVKKNEKILVCEDIITTGKSAMECTKVLEEKGAQIVAFGALANRGICKRTHSHLKAQEGACLPSHLPLFALEDFVFDMHKPNSCPLCATSVAIKPGSRGN</sequence>